<dbReference type="EC" id="6.3.4.4" evidence="1"/>
<dbReference type="EMBL" id="AP011115">
    <property type="protein sequence ID" value="BAH53868.1"/>
    <property type="molecule type" value="Genomic_DNA"/>
</dbReference>
<dbReference type="RefSeq" id="WP_015889367.1">
    <property type="nucleotide sequence ID" value="NC_012522.1"/>
</dbReference>
<dbReference type="SMR" id="C1AWU5"/>
<dbReference type="STRING" id="632772.ROP_56210"/>
<dbReference type="KEGG" id="rop:ROP_56210"/>
<dbReference type="PATRIC" id="fig|632772.20.peg.5870"/>
<dbReference type="HOGENOM" id="CLU_029848_0_0_11"/>
<dbReference type="OrthoDB" id="9807553at2"/>
<dbReference type="UniPathway" id="UPA00075">
    <property type="reaction ID" value="UER00335"/>
</dbReference>
<dbReference type="Proteomes" id="UP000002212">
    <property type="component" value="Chromosome"/>
</dbReference>
<dbReference type="GO" id="GO:0005737">
    <property type="term" value="C:cytoplasm"/>
    <property type="evidence" value="ECO:0007669"/>
    <property type="project" value="UniProtKB-SubCell"/>
</dbReference>
<dbReference type="GO" id="GO:0004019">
    <property type="term" value="F:adenylosuccinate synthase activity"/>
    <property type="evidence" value="ECO:0007669"/>
    <property type="project" value="UniProtKB-UniRule"/>
</dbReference>
<dbReference type="GO" id="GO:0005525">
    <property type="term" value="F:GTP binding"/>
    <property type="evidence" value="ECO:0007669"/>
    <property type="project" value="UniProtKB-UniRule"/>
</dbReference>
<dbReference type="GO" id="GO:0000287">
    <property type="term" value="F:magnesium ion binding"/>
    <property type="evidence" value="ECO:0007669"/>
    <property type="project" value="UniProtKB-UniRule"/>
</dbReference>
<dbReference type="GO" id="GO:0044208">
    <property type="term" value="P:'de novo' AMP biosynthetic process"/>
    <property type="evidence" value="ECO:0007669"/>
    <property type="project" value="UniProtKB-UniRule"/>
</dbReference>
<dbReference type="GO" id="GO:0046040">
    <property type="term" value="P:IMP metabolic process"/>
    <property type="evidence" value="ECO:0007669"/>
    <property type="project" value="TreeGrafter"/>
</dbReference>
<dbReference type="CDD" id="cd03108">
    <property type="entry name" value="AdSS"/>
    <property type="match status" value="1"/>
</dbReference>
<dbReference type="FunFam" id="1.10.300.10:FF:000001">
    <property type="entry name" value="Adenylosuccinate synthetase"/>
    <property type="match status" value="1"/>
</dbReference>
<dbReference type="FunFam" id="3.90.170.10:FF:000001">
    <property type="entry name" value="Adenylosuccinate synthetase"/>
    <property type="match status" value="1"/>
</dbReference>
<dbReference type="Gene3D" id="3.40.440.10">
    <property type="entry name" value="Adenylosuccinate Synthetase, subunit A, domain 1"/>
    <property type="match status" value="1"/>
</dbReference>
<dbReference type="Gene3D" id="1.10.300.10">
    <property type="entry name" value="Adenylosuccinate Synthetase, subunit A, domain 2"/>
    <property type="match status" value="1"/>
</dbReference>
<dbReference type="Gene3D" id="3.90.170.10">
    <property type="entry name" value="Adenylosuccinate Synthetase, subunit A, domain 3"/>
    <property type="match status" value="1"/>
</dbReference>
<dbReference type="HAMAP" id="MF_00011">
    <property type="entry name" value="Adenylosucc_synth"/>
    <property type="match status" value="1"/>
</dbReference>
<dbReference type="InterPro" id="IPR018220">
    <property type="entry name" value="Adenylosuccin_syn_GTP-bd"/>
</dbReference>
<dbReference type="InterPro" id="IPR033128">
    <property type="entry name" value="Adenylosuccin_syn_Lys_AS"/>
</dbReference>
<dbReference type="InterPro" id="IPR042109">
    <property type="entry name" value="Adenylosuccinate_synth_dom1"/>
</dbReference>
<dbReference type="InterPro" id="IPR042110">
    <property type="entry name" value="Adenylosuccinate_synth_dom2"/>
</dbReference>
<dbReference type="InterPro" id="IPR042111">
    <property type="entry name" value="Adenylosuccinate_synth_dom3"/>
</dbReference>
<dbReference type="InterPro" id="IPR001114">
    <property type="entry name" value="Adenylosuccinate_synthetase"/>
</dbReference>
<dbReference type="InterPro" id="IPR027417">
    <property type="entry name" value="P-loop_NTPase"/>
</dbReference>
<dbReference type="NCBIfam" id="NF002223">
    <property type="entry name" value="PRK01117.1"/>
    <property type="match status" value="1"/>
</dbReference>
<dbReference type="NCBIfam" id="TIGR00184">
    <property type="entry name" value="purA"/>
    <property type="match status" value="1"/>
</dbReference>
<dbReference type="PANTHER" id="PTHR11846">
    <property type="entry name" value="ADENYLOSUCCINATE SYNTHETASE"/>
    <property type="match status" value="1"/>
</dbReference>
<dbReference type="PANTHER" id="PTHR11846:SF0">
    <property type="entry name" value="ADENYLOSUCCINATE SYNTHETASE"/>
    <property type="match status" value="1"/>
</dbReference>
<dbReference type="Pfam" id="PF00709">
    <property type="entry name" value="Adenylsucc_synt"/>
    <property type="match status" value="1"/>
</dbReference>
<dbReference type="SMART" id="SM00788">
    <property type="entry name" value="Adenylsucc_synt"/>
    <property type="match status" value="1"/>
</dbReference>
<dbReference type="SUPFAM" id="SSF52540">
    <property type="entry name" value="P-loop containing nucleoside triphosphate hydrolases"/>
    <property type="match status" value="1"/>
</dbReference>
<dbReference type="PROSITE" id="PS01266">
    <property type="entry name" value="ADENYLOSUCCIN_SYN_1"/>
    <property type="match status" value="1"/>
</dbReference>
<dbReference type="PROSITE" id="PS00513">
    <property type="entry name" value="ADENYLOSUCCIN_SYN_2"/>
    <property type="match status" value="1"/>
</dbReference>
<gene>
    <name evidence="1" type="primary">purA</name>
    <name type="ordered locus">ROP_56210</name>
</gene>
<sequence length="429" mass="46550">MPAIVLIGAQWGDEGKGKATDLLGGRLQWVVRYQGGNNAGHTVVLPNGDKFALHLIPSGILTPGVTNVIGNGVVVDPGVLLTELAGLDQRGVDTSRLLLSADAHLIMPYHVAIDKVTERFLGAKKIGTTGRGIGPCYQDKLARVGVRVQDVLDEKILTQKVEAALEFKNQVLVKIYNRKALDPQQVVDEVLEQADGFKHRIADTRLQLNEALERGETVLLEGSQGTLLDVDHGTYPYVTSSNPTSGGAAVGSGIGPTKITTVLGILKAYTTRVGSGPFPTELFDQNGEYLAKTGGEVGVTTGRARRTGWFDAVIARYATRVNGITDYFLTKLDVLSSLDTIPICVGYDVDGVRHDEMPMSQTDVHHAKPIYEEMPGWWEDISHARTFEELPKNAQNYVLRLEELSGAYISCIGVGPGRDETIVRRDVVR</sequence>
<name>PURA_RHOOB</name>
<protein>
    <recommendedName>
        <fullName evidence="1">Adenylosuccinate synthetase</fullName>
        <shortName evidence="1">AMPSase</shortName>
        <shortName evidence="1">AdSS</shortName>
        <ecNumber evidence="1">6.3.4.4</ecNumber>
    </recommendedName>
    <alternativeName>
        <fullName evidence="1">IMP--aspartate ligase</fullName>
    </alternativeName>
</protein>
<proteinExistence type="inferred from homology"/>
<organism>
    <name type="scientific">Rhodococcus opacus (strain B4)</name>
    <dbReference type="NCBI Taxonomy" id="632772"/>
    <lineage>
        <taxon>Bacteria</taxon>
        <taxon>Bacillati</taxon>
        <taxon>Actinomycetota</taxon>
        <taxon>Actinomycetes</taxon>
        <taxon>Mycobacteriales</taxon>
        <taxon>Nocardiaceae</taxon>
        <taxon>Rhodococcus</taxon>
    </lineage>
</organism>
<evidence type="ECO:0000255" key="1">
    <source>
        <dbReference type="HAMAP-Rule" id="MF_00011"/>
    </source>
</evidence>
<reference key="1">
    <citation type="submission" date="2009-03" db="EMBL/GenBank/DDBJ databases">
        <title>Comparison of the complete genome sequences of Rhodococcus erythropolis PR4 and Rhodococcus opacus B4.</title>
        <authorList>
            <person name="Takarada H."/>
            <person name="Sekine M."/>
            <person name="Hosoyama A."/>
            <person name="Yamada R."/>
            <person name="Fujisawa T."/>
            <person name="Omata S."/>
            <person name="Shimizu A."/>
            <person name="Tsukatani N."/>
            <person name="Tanikawa S."/>
            <person name="Fujita N."/>
            <person name="Harayama S."/>
        </authorList>
    </citation>
    <scope>NUCLEOTIDE SEQUENCE [LARGE SCALE GENOMIC DNA]</scope>
    <source>
        <strain>B4</strain>
    </source>
</reference>
<feature type="chain" id="PRO_1000194773" description="Adenylosuccinate synthetase">
    <location>
        <begin position="1"/>
        <end position="429"/>
    </location>
</feature>
<feature type="active site" description="Proton acceptor" evidence="1">
    <location>
        <position position="13"/>
    </location>
</feature>
<feature type="active site" description="Proton donor" evidence="1">
    <location>
        <position position="41"/>
    </location>
</feature>
<feature type="binding site" evidence="1">
    <location>
        <begin position="12"/>
        <end position="18"/>
    </location>
    <ligand>
        <name>GTP</name>
        <dbReference type="ChEBI" id="CHEBI:37565"/>
    </ligand>
</feature>
<feature type="binding site" description="in other chain" evidence="1">
    <location>
        <begin position="13"/>
        <end position="16"/>
    </location>
    <ligand>
        <name>IMP</name>
        <dbReference type="ChEBI" id="CHEBI:58053"/>
        <note>ligand shared between dimeric partners</note>
    </ligand>
</feature>
<feature type="binding site" evidence="1">
    <location>
        <position position="13"/>
    </location>
    <ligand>
        <name>Mg(2+)</name>
        <dbReference type="ChEBI" id="CHEBI:18420"/>
    </ligand>
</feature>
<feature type="binding site" description="in other chain" evidence="1">
    <location>
        <begin position="38"/>
        <end position="41"/>
    </location>
    <ligand>
        <name>IMP</name>
        <dbReference type="ChEBI" id="CHEBI:58053"/>
        <note>ligand shared between dimeric partners</note>
    </ligand>
</feature>
<feature type="binding site" evidence="1">
    <location>
        <begin position="40"/>
        <end position="42"/>
    </location>
    <ligand>
        <name>GTP</name>
        <dbReference type="ChEBI" id="CHEBI:37565"/>
    </ligand>
</feature>
<feature type="binding site" evidence="1">
    <location>
        <position position="40"/>
    </location>
    <ligand>
        <name>Mg(2+)</name>
        <dbReference type="ChEBI" id="CHEBI:18420"/>
    </ligand>
</feature>
<feature type="binding site" description="in other chain" evidence="1">
    <location>
        <position position="129"/>
    </location>
    <ligand>
        <name>IMP</name>
        <dbReference type="ChEBI" id="CHEBI:58053"/>
        <note>ligand shared between dimeric partners</note>
    </ligand>
</feature>
<feature type="binding site" evidence="1">
    <location>
        <position position="143"/>
    </location>
    <ligand>
        <name>IMP</name>
        <dbReference type="ChEBI" id="CHEBI:58053"/>
        <note>ligand shared between dimeric partners</note>
    </ligand>
</feature>
<feature type="binding site" description="in other chain" evidence="1">
    <location>
        <position position="224"/>
    </location>
    <ligand>
        <name>IMP</name>
        <dbReference type="ChEBI" id="CHEBI:58053"/>
        <note>ligand shared between dimeric partners</note>
    </ligand>
</feature>
<feature type="binding site" description="in other chain" evidence="1">
    <location>
        <position position="239"/>
    </location>
    <ligand>
        <name>IMP</name>
        <dbReference type="ChEBI" id="CHEBI:58053"/>
        <note>ligand shared between dimeric partners</note>
    </ligand>
</feature>
<feature type="binding site" evidence="1">
    <location>
        <begin position="299"/>
        <end position="305"/>
    </location>
    <ligand>
        <name>substrate</name>
    </ligand>
</feature>
<feature type="binding site" description="in other chain" evidence="1">
    <location>
        <position position="303"/>
    </location>
    <ligand>
        <name>IMP</name>
        <dbReference type="ChEBI" id="CHEBI:58053"/>
        <note>ligand shared between dimeric partners</note>
    </ligand>
</feature>
<feature type="binding site" evidence="1">
    <location>
        <position position="305"/>
    </location>
    <ligand>
        <name>GTP</name>
        <dbReference type="ChEBI" id="CHEBI:37565"/>
    </ligand>
</feature>
<feature type="binding site" evidence="1">
    <location>
        <begin position="331"/>
        <end position="333"/>
    </location>
    <ligand>
        <name>GTP</name>
        <dbReference type="ChEBI" id="CHEBI:37565"/>
    </ligand>
</feature>
<feature type="binding site" evidence="1">
    <location>
        <begin position="413"/>
        <end position="415"/>
    </location>
    <ligand>
        <name>GTP</name>
        <dbReference type="ChEBI" id="CHEBI:37565"/>
    </ligand>
</feature>
<comment type="function">
    <text evidence="1">Plays an important role in the de novo pathway of purine nucleotide biosynthesis. Catalyzes the first committed step in the biosynthesis of AMP from IMP.</text>
</comment>
<comment type="catalytic activity">
    <reaction evidence="1">
        <text>IMP + L-aspartate + GTP = N(6)-(1,2-dicarboxyethyl)-AMP + GDP + phosphate + 2 H(+)</text>
        <dbReference type="Rhea" id="RHEA:15753"/>
        <dbReference type="ChEBI" id="CHEBI:15378"/>
        <dbReference type="ChEBI" id="CHEBI:29991"/>
        <dbReference type="ChEBI" id="CHEBI:37565"/>
        <dbReference type="ChEBI" id="CHEBI:43474"/>
        <dbReference type="ChEBI" id="CHEBI:57567"/>
        <dbReference type="ChEBI" id="CHEBI:58053"/>
        <dbReference type="ChEBI" id="CHEBI:58189"/>
        <dbReference type="EC" id="6.3.4.4"/>
    </reaction>
</comment>
<comment type="cofactor">
    <cofactor evidence="1">
        <name>Mg(2+)</name>
        <dbReference type="ChEBI" id="CHEBI:18420"/>
    </cofactor>
    <text evidence="1">Binds 1 Mg(2+) ion per subunit.</text>
</comment>
<comment type="pathway">
    <text evidence="1">Purine metabolism; AMP biosynthesis via de novo pathway; AMP from IMP: step 1/2.</text>
</comment>
<comment type="subunit">
    <text evidence="1">Homodimer.</text>
</comment>
<comment type="subcellular location">
    <subcellularLocation>
        <location evidence="1">Cytoplasm</location>
    </subcellularLocation>
</comment>
<comment type="similarity">
    <text evidence="1">Belongs to the adenylosuccinate synthetase family.</text>
</comment>
<accession>C1AWU5</accession>
<keyword id="KW-0963">Cytoplasm</keyword>
<keyword id="KW-0342">GTP-binding</keyword>
<keyword id="KW-0436">Ligase</keyword>
<keyword id="KW-0460">Magnesium</keyword>
<keyword id="KW-0479">Metal-binding</keyword>
<keyword id="KW-0547">Nucleotide-binding</keyword>
<keyword id="KW-0658">Purine biosynthesis</keyword>